<gene>
    <name type="ORF">PTT_10145</name>
</gene>
<dbReference type="EC" id="3.4.11.9"/>
<dbReference type="EMBL" id="GL534210">
    <property type="protein sequence ID" value="EFQ92700.1"/>
    <property type="molecule type" value="Genomic_DNA"/>
</dbReference>
<dbReference type="RefSeq" id="XP_003299200.1">
    <property type="nucleotide sequence ID" value="XM_003299152.1"/>
</dbReference>
<dbReference type="SMR" id="E3RNJ5"/>
<dbReference type="STRING" id="861557.E3RNJ5"/>
<dbReference type="EnsemblFungi" id="EFQ92700">
    <property type="protein sequence ID" value="EFQ92700"/>
    <property type="gene ID" value="PTT_10145"/>
</dbReference>
<dbReference type="KEGG" id="pte:PTT_10145"/>
<dbReference type="eggNOG" id="KOG2737">
    <property type="taxonomic scope" value="Eukaryota"/>
</dbReference>
<dbReference type="HOGENOM" id="CLU_017266_1_2_1"/>
<dbReference type="OrthoDB" id="10261878at2759"/>
<dbReference type="Proteomes" id="UP000001067">
    <property type="component" value="Unassembled WGS sequence"/>
</dbReference>
<dbReference type="GO" id="GO:0030145">
    <property type="term" value="F:manganese ion binding"/>
    <property type="evidence" value="ECO:0007669"/>
    <property type="project" value="InterPro"/>
</dbReference>
<dbReference type="GO" id="GO:0070006">
    <property type="term" value="F:metalloaminopeptidase activity"/>
    <property type="evidence" value="ECO:0007669"/>
    <property type="project" value="InterPro"/>
</dbReference>
<dbReference type="GO" id="GO:0006508">
    <property type="term" value="P:proteolysis"/>
    <property type="evidence" value="ECO:0007669"/>
    <property type="project" value="UniProtKB-KW"/>
</dbReference>
<dbReference type="CDD" id="cd01087">
    <property type="entry name" value="Prolidase"/>
    <property type="match status" value="1"/>
</dbReference>
<dbReference type="Gene3D" id="3.90.230.10">
    <property type="entry name" value="Creatinase/methionine aminopeptidase superfamily"/>
    <property type="match status" value="1"/>
</dbReference>
<dbReference type="Gene3D" id="3.40.350.10">
    <property type="entry name" value="Creatinase/prolidase N-terminal domain"/>
    <property type="match status" value="1"/>
</dbReference>
<dbReference type="InterPro" id="IPR007865">
    <property type="entry name" value="Aminopep_P_N"/>
</dbReference>
<dbReference type="InterPro" id="IPR029149">
    <property type="entry name" value="Creatin/AminoP/Spt16_N"/>
</dbReference>
<dbReference type="InterPro" id="IPR036005">
    <property type="entry name" value="Creatinase/aminopeptidase-like"/>
</dbReference>
<dbReference type="InterPro" id="IPR000994">
    <property type="entry name" value="Pept_M24"/>
</dbReference>
<dbReference type="InterPro" id="IPR001131">
    <property type="entry name" value="Peptidase_M24B_aminopep-P_CS"/>
</dbReference>
<dbReference type="InterPro" id="IPR052433">
    <property type="entry name" value="X-Pro_dipept-like"/>
</dbReference>
<dbReference type="PANTHER" id="PTHR43226">
    <property type="entry name" value="XAA-PRO AMINOPEPTIDASE 3"/>
    <property type="match status" value="1"/>
</dbReference>
<dbReference type="PANTHER" id="PTHR43226:SF3">
    <property type="entry name" value="XAA-PRO AMINOPEPTIDASE AN0832-RELATED"/>
    <property type="match status" value="1"/>
</dbReference>
<dbReference type="Pfam" id="PF05195">
    <property type="entry name" value="AMP_N"/>
    <property type="match status" value="1"/>
</dbReference>
<dbReference type="Pfam" id="PF00557">
    <property type="entry name" value="Peptidase_M24"/>
    <property type="match status" value="1"/>
</dbReference>
<dbReference type="SMART" id="SM01011">
    <property type="entry name" value="AMP_N"/>
    <property type="match status" value="1"/>
</dbReference>
<dbReference type="SUPFAM" id="SSF55920">
    <property type="entry name" value="Creatinase/aminopeptidase"/>
    <property type="match status" value="1"/>
</dbReference>
<dbReference type="SUPFAM" id="SSF53092">
    <property type="entry name" value="Creatinase/prolidase N-terminal domain"/>
    <property type="match status" value="1"/>
</dbReference>
<dbReference type="PROSITE" id="PS00491">
    <property type="entry name" value="PROLINE_PEPTIDASE"/>
    <property type="match status" value="1"/>
</dbReference>
<name>AMPP2_PYRTT</name>
<accession>E3RNJ5</accession>
<proteinExistence type="inferred from homology"/>
<evidence type="ECO:0000250" key="1"/>
<evidence type="ECO:0000256" key="2">
    <source>
        <dbReference type="SAM" id="MobiDB-lite"/>
    </source>
</evidence>
<evidence type="ECO:0000305" key="3"/>
<reference key="1">
    <citation type="journal article" date="2010" name="Genome Biol.">
        <title>A first genome assembly of the barley fungal pathogen Pyrenophora teres f. teres.</title>
        <authorList>
            <person name="Ellwood S.R."/>
            <person name="Liu Z."/>
            <person name="Syme R.A."/>
            <person name="Lai Z."/>
            <person name="Hane J.K."/>
            <person name="Keiper F."/>
            <person name="Moffat C.S."/>
            <person name="Oliver R.P."/>
            <person name="Friesen T.L."/>
        </authorList>
    </citation>
    <scope>NUCLEOTIDE SEQUENCE [LARGE SCALE GENOMIC DNA]</scope>
    <source>
        <strain>0-1</strain>
    </source>
</reference>
<keyword id="KW-0031">Aminopeptidase</keyword>
<keyword id="KW-0378">Hydrolase</keyword>
<keyword id="KW-0464">Manganese</keyword>
<keyword id="KW-0479">Metal-binding</keyword>
<keyword id="KW-0482">Metalloprotease</keyword>
<keyword id="KW-0645">Protease</keyword>
<keyword id="KW-1185">Reference proteome</keyword>
<organism>
    <name type="scientific">Pyrenophora teres f. teres (strain 0-1)</name>
    <name type="common">Barley net blotch fungus</name>
    <name type="synonym">Drechslera teres f. teres</name>
    <dbReference type="NCBI Taxonomy" id="861557"/>
    <lineage>
        <taxon>Eukaryota</taxon>
        <taxon>Fungi</taxon>
        <taxon>Dikarya</taxon>
        <taxon>Ascomycota</taxon>
        <taxon>Pezizomycotina</taxon>
        <taxon>Dothideomycetes</taxon>
        <taxon>Pleosporomycetidae</taxon>
        <taxon>Pleosporales</taxon>
        <taxon>Pleosporineae</taxon>
        <taxon>Pleosporaceae</taxon>
        <taxon>Pyrenophora</taxon>
    </lineage>
</organism>
<feature type="chain" id="PRO_0000411850" description="Probable Xaa-Pro aminopeptidase PTT_10145">
    <location>
        <begin position="1"/>
        <end position="926"/>
    </location>
</feature>
<feature type="region of interest" description="Disordered" evidence="2">
    <location>
        <begin position="505"/>
        <end position="538"/>
    </location>
</feature>
<feature type="region of interest" description="Disordered" evidence="2">
    <location>
        <begin position="595"/>
        <end position="615"/>
    </location>
</feature>
<feature type="region of interest" description="Disordered" evidence="2">
    <location>
        <begin position="668"/>
        <end position="696"/>
    </location>
</feature>
<feature type="region of interest" description="Disordered" evidence="2">
    <location>
        <begin position="711"/>
        <end position="741"/>
    </location>
</feature>
<feature type="region of interest" description="Disordered" evidence="2">
    <location>
        <begin position="865"/>
        <end position="926"/>
    </location>
</feature>
<feature type="compositionally biased region" description="Polar residues" evidence="2">
    <location>
        <begin position="506"/>
        <end position="515"/>
    </location>
</feature>
<feature type="compositionally biased region" description="Basic and acidic residues" evidence="2">
    <location>
        <begin position="685"/>
        <end position="696"/>
    </location>
</feature>
<feature type="compositionally biased region" description="Basic and acidic residues" evidence="2">
    <location>
        <begin position="719"/>
        <end position="730"/>
    </location>
</feature>
<feature type="compositionally biased region" description="Polar residues" evidence="2">
    <location>
        <begin position="887"/>
        <end position="897"/>
    </location>
</feature>
<feature type="compositionally biased region" description="Basic and acidic residues" evidence="2">
    <location>
        <begin position="900"/>
        <end position="915"/>
    </location>
</feature>
<feature type="binding site" evidence="1">
    <location>
        <position position="274"/>
    </location>
    <ligand>
        <name>Mn(2+)</name>
        <dbReference type="ChEBI" id="CHEBI:29035"/>
        <label>2</label>
    </ligand>
</feature>
<feature type="binding site" evidence="1">
    <location>
        <position position="285"/>
    </location>
    <ligand>
        <name>Mn(2+)</name>
        <dbReference type="ChEBI" id="CHEBI:29035"/>
        <label>1</label>
    </ligand>
</feature>
<feature type="binding site" evidence="1">
    <location>
        <position position="285"/>
    </location>
    <ligand>
        <name>Mn(2+)</name>
        <dbReference type="ChEBI" id="CHEBI:29035"/>
        <label>2</label>
    </ligand>
</feature>
<feature type="binding site" evidence="1">
    <location>
        <position position="435"/>
    </location>
    <ligand>
        <name>Mn(2+)</name>
        <dbReference type="ChEBI" id="CHEBI:29035"/>
        <label>1</label>
    </ligand>
</feature>
<feature type="binding site" evidence="1">
    <location>
        <position position="476"/>
    </location>
    <ligand>
        <name>Mn(2+)</name>
        <dbReference type="ChEBI" id="CHEBI:29035"/>
        <label>1</label>
    </ligand>
</feature>
<feature type="binding site" evidence="1">
    <location>
        <position position="476"/>
    </location>
    <ligand>
        <name>Mn(2+)</name>
        <dbReference type="ChEBI" id="CHEBI:29035"/>
        <label>2</label>
    </ligand>
</feature>
<protein>
    <recommendedName>
        <fullName>Probable Xaa-Pro aminopeptidase PTT_10145</fullName>
        <ecNumber>3.4.11.9</ecNumber>
    </recommendedName>
    <alternativeName>
        <fullName>Aminoacylproline aminopeptidase</fullName>
    </alternativeName>
    <alternativeName>
        <fullName>Prolidase</fullName>
    </alternativeName>
</protein>
<sequence length="926" mass="104628">MEVLDATGLAERLRWEDNDYWLHLEAETPFDKYPAKQHARRVQAKLGIEDGLIYLPGQPARNNEDSDMPAPFRQRRYFYYMSGCDEPDCHLMYDIRRDVLTLFIPRIKPERVIWNGRGSTPAEALAKYDIDQVHHSQDLTYIIQNWAFKHQHTSIYILHPSSRIPGCDNLMPRIDSHSLQPAISLCRMIKDDHEIKRIRKANDISSQAHREVLANIHKYKNEAQVEGLFMDVCISQQAKQQAYDPIAASGPNAGTLHYDANNEDLAGRQLMCLDAGCEYELYASDITRTFPLSASWPSKEAENIYNLVQRMQETCIERLEPGVRYLDLHIMAHQIAIDGLLRLGILCNGTREEIYKAGTSRAFFPHGLGHHIGLEVHDVGQAELMSVRRGKPVYQQAPSLYPENFHDPVYDSETCHAPTDPQSSHLEEGMVVTVEPGIYFSVYALQHFYLPSPIHSKFINLEVLERYLPVGGVRIEDDLLITANGHENLTTAPKGEAMLDIIRQGNPGTTEILNPSPTPPRRMRSENRTPRLRAPGISKKTLQPLLTPLARAATLPTELRQQDDIDFEPIVGPSLFSGFSRAMTTEEKIQQWKQKRDSVPTAPSRPTKAKNLSPVCGENTANVQHVYMSTVSDLSSLSQSSVGSGSTSMCKNCGILVQTLDRLRQNLSSSTQTSPKPMTVPTFESRQKSHTVEEKHREMVCTDSLLDKVSIGQSNRAIGPEERRRKAQSDHHHHSRLKAATGEVKSRFSTRYTPAGVPPLMPSHDQYSITRRPNPERMQPVADTPIVPPRHLTYMTSTPQQSTENPALADLGLPRASAEIAAIRATKQAGQEKLDTQRTTLDAFQDEGQRLVIRSRHRLIPQTSMPVLMSQNPYHHHSNRSHGREGNNATNKRSMIDSQPAERRTRPERPERPARDYVPGDEFLTR</sequence>
<comment type="function">
    <text evidence="1">Catalyzes the removal of a penultimate prolyl residue from the N-termini of peptides.</text>
</comment>
<comment type="catalytic activity">
    <reaction>
        <text>Release of any N-terminal amino acid, including proline, that is linked to proline, even from a dipeptide or tripeptide.</text>
        <dbReference type="EC" id="3.4.11.9"/>
    </reaction>
</comment>
<comment type="cofactor">
    <cofactor evidence="1">
        <name>Mn(2+)</name>
        <dbReference type="ChEBI" id="CHEBI:29035"/>
    </cofactor>
    <text evidence="1">Binds 2 manganese ions per subunit.</text>
</comment>
<comment type="similarity">
    <text evidence="3">Belongs to the peptidase M24B family.</text>
</comment>